<organism>
    <name type="scientific">Staphylococcus aureus (strain JH1)</name>
    <dbReference type="NCBI Taxonomy" id="359787"/>
    <lineage>
        <taxon>Bacteria</taxon>
        <taxon>Bacillati</taxon>
        <taxon>Bacillota</taxon>
        <taxon>Bacilli</taxon>
        <taxon>Bacillales</taxon>
        <taxon>Staphylococcaceae</taxon>
        <taxon>Staphylococcus</taxon>
    </lineage>
</organism>
<reference key="1">
    <citation type="submission" date="2007-06" db="EMBL/GenBank/DDBJ databases">
        <title>Complete sequence of chromosome of Staphylococcus aureus subsp. aureus JH1.</title>
        <authorList>
            <consortium name="US DOE Joint Genome Institute"/>
            <person name="Copeland A."/>
            <person name="Lucas S."/>
            <person name="Lapidus A."/>
            <person name="Barry K."/>
            <person name="Detter J.C."/>
            <person name="Glavina del Rio T."/>
            <person name="Hammon N."/>
            <person name="Israni S."/>
            <person name="Dalin E."/>
            <person name="Tice H."/>
            <person name="Pitluck S."/>
            <person name="Chain P."/>
            <person name="Malfatti S."/>
            <person name="Shin M."/>
            <person name="Vergez L."/>
            <person name="Schmutz J."/>
            <person name="Larimer F."/>
            <person name="Land M."/>
            <person name="Hauser L."/>
            <person name="Kyrpides N."/>
            <person name="Ivanova N."/>
            <person name="Tomasz A."/>
            <person name="Richardson P."/>
        </authorList>
    </citation>
    <scope>NUCLEOTIDE SEQUENCE [LARGE SCALE GENOMIC DNA]</scope>
    <source>
        <strain>JH1</strain>
    </source>
</reference>
<name>ODO1_STAA2</name>
<comment type="function">
    <text evidence="1">E1 component of the 2-oxoglutarate dehydrogenase (OGDH) complex which catalyzes the decarboxylation of 2-oxoglutarate, the first step in the conversion of 2-oxoglutarate to succinyl-CoA and CO(2).</text>
</comment>
<comment type="catalytic activity">
    <reaction evidence="1">
        <text>N(6)-[(R)-lipoyl]-L-lysyl-[protein] + 2-oxoglutarate + H(+) = N(6)-[(R)-S(8)-succinyldihydrolipoyl]-L-lysyl-[protein] + CO2</text>
        <dbReference type="Rhea" id="RHEA:12188"/>
        <dbReference type="Rhea" id="RHEA-COMP:10474"/>
        <dbReference type="Rhea" id="RHEA-COMP:20092"/>
        <dbReference type="ChEBI" id="CHEBI:15378"/>
        <dbReference type="ChEBI" id="CHEBI:16526"/>
        <dbReference type="ChEBI" id="CHEBI:16810"/>
        <dbReference type="ChEBI" id="CHEBI:83099"/>
        <dbReference type="ChEBI" id="CHEBI:83120"/>
        <dbReference type="EC" id="1.2.4.2"/>
    </reaction>
</comment>
<comment type="cofactor">
    <cofactor evidence="1">
        <name>thiamine diphosphate</name>
        <dbReference type="ChEBI" id="CHEBI:58937"/>
    </cofactor>
</comment>
<comment type="subunit">
    <text evidence="1">Homodimer. Part of the 2-oxoglutarate dehydrogenase (OGDH) complex composed of E1 (2-oxoglutarate dehydrogenase), E2 (dihydrolipoamide succinyltransferase) and E3 (dihydrolipoamide dehydrogenase); the complex contains multiple copies of the three enzymatic components (E1, E2 and E3).</text>
</comment>
<comment type="similarity">
    <text evidence="1">Belongs to the alpha-ketoglutarate dehydrogenase family.</text>
</comment>
<protein>
    <recommendedName>
        <fullName evidence="1">2-oxoglutarate dehydrogenase E1 component</fullName>
        <ecNumber evidence="1">1.2.4.2</ecNumber>
    </recommendedName>
    <alternativeName>
        <fullName evidence="1">Alpha-ketoglutarate dehydrogenase</fullName>
    </alternativeName>
</protein>
<evidence type="ECO:0000255" key="1">
    <source>
        <dbReference type="HAMAP-Rule" id="MF_01169"/>
    </source>
</evidence>
<proteinExistence type="inferred from homology"/>
<dbReference type="EC" id="1.2.4.2" evidence="1"/>
<dbReference type="EMBL" id="CP000736">
    <property type="protein sequence ID" value="ABR52352.1"/>
    <property type="molecule type" value="Genomic_DNA"/>
</dbReference>
<dbReference type="SMR" id="A6U1N4"/>
<dbReference type="KEGG" id="sah:SaurJH1_1503"/>
<dbReference type="HOGENOM" id="CLU_004709_1_0_9"/>
<dbReference type="GO" id="GO:0005829">
    <property type="term" value="C:cytosol"/>
    <property type="evidence" value="ECO:0007669"/>
    <property type="project" value="TreeGrafter"/>
</dbReference>
<dbReference type="GO" id="GO:0045252">
    <property type="term" value="C:oxoglutarate dehydrogenase complex"/>
    <property type="evidence" value="ECO:0007669"/>
    <property type="project" value="TreeGrafter"/>
</dbReference>
<dbReference type="GO" id="GO:0004591">
    <property type="term" value="F:oxoglutarate dehydrogenase (succinyl-transferring) activity"/>
    <property type="evidence" value="ECO:0007669"/>
    <property type="project" value="UniProtKB-UniRule"/>
</dbReference>
<dbReference type="GO" id="GO:0030976">
    <property type="term" value="F:thiamine pyrophosphate binding"/>
    <property type="evidence" value="ECO:0007669"/>
    <property type="project" value="UniProtKB-UniRule"/>
</dbReference>
<dbReference type="GO" id="GO:0006096">
    <property type="term" value="P:glycolytic process"/>
    <property type="evidence" value="ECO:0007669"/>
    <property type="project" value="UniProtKB-UniRule"/>
</dbReference>
<dbReference type="GO" id="GO:0006099">
    <property type="term" value="P:tricarboxylic acid cycle"/>
    <property type="evidence" value="ECO:0007669"/>
    <property type="project" value="TreeGrafter"/>
</dbReference>
<dbReference type="CDD" id="cd02016">
    <property type="entry name" value="TPP_E1_OGDC_like"/>
    <property type="match status" value="1"/>
</dbReference>
<dbReference type="FunFam" id="3.40.50.11610:FF:000002">
    <property type="entry name" value="2-oxoglutarate dehydrogenase E1 component"/>
    <property type="match status" value="1"/>
</dbReference>
<dbReference type="FunFam" id="3.40.50.970:FF:000036">
    <property type="entry name" value="2-oxoglutarate dehydrogenase E1 component"/>
    <property type="match status" value="1"/>
</dbReference>
<dbReference type="Gene3D" id="3.40.50.12470">
    <property type="match status" value="1"/>
</dbReference>
<dbReference type="Gene3D" id="3.40.50.970">
    <property type="match status" value="1"/>
</dbReference>
<dbReference type="Gene3D" id="3.40.50.11610">
    <property type="entry name" value="Multifunctional 2-oxoglutarate metabolism enzyme, C-terminal domain"/>
    <property type="match status" value="1"/>
</dbReference>
<dbReference type="Gene3D" id="1.10.287.1150">
    <property type="entry name" value="TPP helical domain"/>
    <property type="match status" value="1"/>
</dbReference>
<dbReference type="HAMAP" id="MF_01169">
    <property type="entry name" value="SucA_OdhA"/>
    <property type="match status" value="1"/>
</dbReference>
<dbReference type="InterPro" id="IPR011603">
    <property type="entry name" value="2oxoglutarate_DH_E1"/>
</dbReference>
<dbReference type="InterPro" id="IPR023784">
    <property type="entry name" value="2oxoglutarate_DH_E1_bac"/>
</dbReference>
<dbReference type="InterPro" id="IPR001017">
    <property type="entry name" value="DH_E1"/>
</dbReference>
<dbReference type="InterPro" id="IPR042179">
    <property type="entry name" value="KGD_C_sf"/>
</dbReference>
<dbReference type="InterPro" id="IPR031717">
    <property type="entry name" value="ODO-1/KGD_C"/>
</dbReference>
<dbReference type="InterPro" id="IPR029061">
    <property type="entry name" value="THDP-binding"/>
</dbReference>
<dbReference type="InterPro" id="IPR005475">
    <property type="entry name" value="Transketolase-like_Pyr-bd"/>
</dbReference>
<dbReference type="NCBIfam" id="TIGR00239">
    <property type="entry name" value="2oxo_dh_E1"/>
    <property type="match status" value="1"/>
</dbReference>
<dbReference type="NCBIfam" id="NF006914">
    <property type="entry name" value="PRK09404.1"/>
    <property type="match status" value="1"/>
</dbReference>
<dbReference type="NCBIfam" id="NF008907">
    <property type="entry name" value="PRK12270.1"/>
    <property type="match status" value="1"/>
</dbReference>
<dbReference type="PANTHER" id="PTHR23152:SF4">
    <property type="entry name" value="2-OXOADIPATE DEHYDROGENASE COMPLEX COMPONENT E1"/>
    <property type="match status" value="1"/>
</dbReference>
<dbReference type="PANTHER" id="PTHR23152">
    <property type="entry name" value="2-OXOGLUTARATE DEHYDROGENASE"/>
    <property type="match status" value="1"/>
</dbReference>
<dbReference type="Pfam" id="PF00676">
    <property type="entry name" value="E1_dh"/>
    <property type="match status" value="1"/>
</dbReference>
<dbReference type="Pfam" id="PF16870">
    <property type="entry name" value="OxoGdeHyase_C"/>
    <property type="match status" value="1"/>
</dbReference>
<dbReference type="Pfam" id="PF02779">
    <property type="entry name" value="Transket_pyr"/>
    <property type="match status" value="1"/>
</dbReference>
<dbReference type="PIRSF" id="PIRSF000157">
    <property type="entry name" value="Oxoglu_dh_E1"/>
    <property type="match status" value="1"/>
</dbReference>
<dbReference type="SMART" id="SM00861">
    <property type="entry name" value="Transket_pyr"/>
    <property type="match status" value="1"/>
</dbReference>
<dbReference type="SUPFAM" id="SSF52518">
    <property type="entry name" value="Thiamin diphosphate-binding fold (THDP-binding)"/>
    <property type="match status" value="2"/>
</dbReference>
<feature type="chain" id="PRO_1000085387" description="2-oxoglutarate dehydrogenase E1 component">
    <location>
        <begin position="1"/>
        <end position="932"/>
    </location>
</feature>
<gene>
    <name evidence="1" type="primary">odhA</name>
    <name type="ordered locus">SaurJH1_1503</name>
</gene>
<accession>A6U1N4</accession>
<keyword id="KW-0324">Glycolysis</keyword>
<keyword id="KW-0560">Oxidoreductase</keyword>
<keyword id="KW-0786">Thiamine pyrophosphate</keyword>
<sequence>MTNERKEVSEAPVNFGANLGLMLDLYDDFLQDPSSVPEDLQVLFSTIKNDDSIVPALKSTSSQNSDGTIKRVMRLIDNIRQYGHLKADIYPVNPPKRKHVPKLEIEDFDLDQQTLEGISAGIVSDHFADIYDNAYEAILRMEKRYKGPIAFEYTHINNNTERGWLKRRIETPYKVTLNNNEKRALFKQLAYVEGFEKYLHKNFVGAKRFSIEGVDALVPMLQRTITIAAKEGIKNIQIGMAHRGRLNVLTHVLEKPYEMMISEFMHTDPMKFLPEDGSLQLTAGWTGDVKYHLGGIKTTDSYGTMQRIALANNPSHLEIVAPVVEGRTRAAQDDTQRAGAPTTDHHKAMPIIIHGDAAYPGQGINFETMNLGNLKGYSTGGSLHIITNNRIGFTTEPIDARSTTYSTDVAKGYDVPIFHVNADDVEATIEAIDIAMEFRKEFHKDVVIDLVGYRRFGHNEMDEPSITNPVPYQNIRKHDSVEYVFGKKLVNEGVISEDEMHSFIEQVQKELRQAHDKINKADKMDNPDMEKPAELALPLQADEQSFTFDHLKEINDALLTYPDGFNILKKLNKVLEKRHEPFNKEDGLVDWAQAEQLAFATILQDGTPIRLTGQDSERGTFSHRHAVLHDEQTGETYTPLHHVPDQKATFDIHNSPLSEAAVVGFEYGYNVENKKSFNIWEAQYGDFANMSQMIFDNFLFSSRSKWGERSGLTLFLPHAYEGQGPEHSSARLERFLQLAAENNCTVVNLSSSSNYFHLLRAQAASLDSEQMRPLVVMSPKSLLRNKTVAKPIDEFTSGGFEPILTESYQADKVTKVILATGKMFIDLKEALAKNPDESVLLVAIERLYPFPEEEIEALLAQLPNLEEVSWVQEEPKNQGAWLYVYPYVKVLVADKYDLSYHGRIQRAAPAEGDGEIHKLVQNKIIENALKNN</sequence>